<dbReference type="EMBL" id="BC159142">
    <property type="protein sequence ID" value="AAI59143.1"/>
    <property type="molecule type" value="mRNA"/>
</dbReference>
<dbReference type="RefSeq" id="NP_001120149.1">
    <property type="nucleotide sequence ID" value="NM_001126677.1"/>
</dbReference>
<dbReference type="SMR" id="B0JZE1"/>
<dbReference type="FunCoup" id="B0JZE1">
    <property type="interactions" value="468"/>
</dbReference>
<dbReference type="STRING" id="8364.ENSXETP00000009086"/>
<dbReference type="PaxDb" id="8364-ENSXETP00000063338"/>
<dbReference type="GeneID" id="100145187"/>
<dbReference type="KEGG" id="xtr:100145187"/>
<dbReference type="AGR" id="Xenbase:XB-GENE-5793583"/>
<dbReference type="CTD" id="124976"/>
<dbReference type="Xenbase" id="XB-GENE-5793583">
    <property type="gene designation" value="spns2"/>
</dbReference>
<dbReference type="eggNOG" id="KOG1330">
    <property type="taxonomic scope" value="Eukaryota"/>
</dbReference>
<dbReference type="InParanoid" id="B0JZE1"/>
<dbReference type="OMA" id="VFCGGWL"/>
<dbReference type="OrthoDB" id="6770063at2759"/>
<dbReference type="Reactome" id="R-XTR-1660661">
    <property type="pathway name" value="Sphingolipid de novo biosynthesis"/>
</dbReference>
<dbReference type="Proteomes" id="UP000008143">
    <property type="component" value="Chromosome 2"/>
</dbReference>
<dbReference type="GO" id="GO:0010008">
    <property type="term" value="C:endosome membrane"/>
    <property type="evidence" value="ECO:0007669"/>
    <property type="project" value="UniProtKB-SubCell"/>
</dbReference>
<dbReference type="GO" id="GO:0005886">
    <property type="term" value="C:plasma membrane"/>
    <property type="evidence" value="ECO:0007669"/>
    <property type="project" value="UniProtKB-SubCell"/>
</dbReference>
<dbReference type="GO" id="GO:0046624">
    <property type="term" value="F:sphingolipid transporter activity"/>
    <property type="evidence" value="ECO:0000250"/>
    <property type="project" value="UniProtKB"/>
</dbReference>
<dbReference type="GO" id="GO:0022857">
    <property type="term" value="F:transmembrane transporter activity"/>
    <property type="evidence" value="ECO:0007669"/>
    <property type="project" value="InterPro"/>
</dbReference>
<dbReference type="GO" id="GO:0002920">
    <property type="term" value="P:regulation of humoral immune response"/>
    <property type="evidence" value="ECO:0000250"/>
    <property type="project" value="UniProtKB"/>
</dbReference>
<dbReference type="GO" id="GO:2000404">
    <property type="term" value="P:regulation of T cell migration"/>
    <property type="evidence" value="ECO:0000250"/>
    <property type="project" value="UniProtKB"/>
</dbReference>
<dbReference type="GO" id="GO:0007605">
    <property type="term" value="P:sensory perception of sound"/>
    <property type="evidence" value="ECO:0000250"/>
    <property type="project" value="UniProtKB"/>
</dbReference>
<dbReference type="GO" id="GO:0003376">
    <property type="term" value="P:sphingosine-1-phosphate receptor signaling pathway"/>
    <property type="evidence" value="ECO:0000250"/>
    <property type="project" value="UniProtKB"/>
</dbReference>
<dbReference type="CDD" id="cd17328">
    <property type="entry name" value="MFS_spinster_like"/>
    <property type="match status" value="1"/>
</dbReference>
<dbReference type="FunFam" id="1.20.1250.20:FF:000097">
    <property type="entry name" value="protein spinster homolog 1"/>
    <property type="match status" value="1"/>
</dbReference>
<dbReference type="Gene3D" id="1.20.1250.20">
    <property type="entry name" value="MFS general substrate transporter like domains"/>
    <property type="match status" value="1"/>
</dbReference>
<dbReference type="InterPro" id="IPR011701">
    <property type="entry name" value="MFS"/>
</dbReference>
<dbReference type="InterPro" id="IPR020846">
    <property type="entry name" value="MFS_dom"/>
</dbReference>
<dbReference type="InterPro" id="IPR044770">
    <property type="entry name" value="MFS_spinster-like"/>
</dbReference>
<dbReference type="InterPro" id="IPR036259">
    <property type="entry name" value="MFS_trans_sf"/>
</dbReference>
<dbReference type="PANTHER" id="PTHR23505:SF4">
    <property type="entry name" value="SPHINGOSINE-1-PHOSPHATE TRANSPORTER SPNS2"/>
    <property type="match status" value="1"/>
</dbReference>
<dbReference type="PANTHER" id="PTHR23505">
    <property type="entry name" value="SPINSTER"/>
    <property type="match status" value="1"/>
</dbReference>
<dbReference type="Pfam" id="PF07690">
    <property type="entry name" value="MFS_1"/>
    <property type="match status" value="1"/>
</dbReference>
<dbReference type="SUPFAM" id="SSF103473">
    <property type="entry name" value="MFS general substrate transporter"/>
    <property type="match status" value="1"/>
</dbReference>
<dbReference type="PROSITE" id="PS50850">
    <property type="entry name" value="MFS"/>
    <property type="match status" value="1"/>
</dbReference>
<accession>B0JZE1</accession>
<comment type="function">
    <text evidence="1">Lipid transporter that specifically mediates export of sphingosine-1-phosphate (sphing-4-enine 1-phosphate, S1P) and sphinganine-1-phosphate.</text>
</comment>
<comment type="catalytic activity">
    <reaction evidence="2">
        <text>sphing-4-enine 1-phosphate(in) = sphing-4-enine 1-phosphate(out)</text>
        <dbReference type="Rhea" id="RHEA:38667"/>
        <dbReference type="ChEBI" id="CHEBI:60119"/>
    </reaction>
</comment>
<comment type="catalytic activity">
    <reaction evidence="2">
        <text>sphinganine 1-phosphate(in) = sphinganine 1-phosphate(out)</text>
        <dbReference type="Rhea" id="RHEA:38671"/>
        <dbReference type="ChEBI" id="CHEBI:57939"/>
    </reaction>
</comment>
<comment type="subcellular location">
    <subcellularLocation>
        <location evidence="1">Cell membrane</location>
        <topology evidence="3">Multi-pass membrane protein</topology>
    </subcellularLocation>
    <subcellularLocation>
        <location evidence="1">Endosome membrane</location>
        <topology evidence="3">Multi-pass membrane protein</topology>
    </subcellularLocation>
</comment>
<comment type="similarity">
    <text evidence="4">Belongs to the major facilitator superfamily. Spinster (TC 2.A.1.49) family.</text>
</comment>
<evidence type="ECO:0000250" key="1">
    <source>
        <dbReference type="UniProtKB" id="A2SWM2"/>
    </source>
</evidence>
<evidence type="ECO:0000250" key="2">
    <source>
        <dbReference type="UniProtKB" id="Q8IVW8"/>
    </source>
</evidence>
<evidence type="ECO:0000255" key="3"/>
<evidence type="ECO:0000305" key="4"/>
<keyword id="KW-1003">Cell membrane</keyword>
<keyword id="KW-0967">Endosome</keyword>
<keyword id="KW-0445">Lipid transport</keyword>
<keyword id="KW-0472">Membrane</keyword>
<keyword id="KW-1185">Reference proteome</keyword>
<keyword id="KW-0812">Transmembrane</keyword>
<keyword id="KW-1133">Transmembrane helix</keyword>
<keyword id="KW-0813">Transport</keyword>
<organism>
    <name type="scientific">Xenopus tropicalis</name>
    <name type="common">Western clawed frog</name>
    <name type="synonym">Silurana tropicalis</name>
    <dbReference type="NCBI Taxonomy" id="8364"/>
    <lineage>
        <taxon>Eukaryota</taxon>
        <taxon>Metazoa</taxon>
        <taxon>Chordata</taxon>
        <taxon>Craniata</taxon>
        <taxon>Vertebrata</taxon>
        <taxon>Euteleostomi</taxon>
        <taxon>Amphibia</taxon>
        <taxon>Batrachia</taxon>
        <taxon>Anura</taxon>
        <taxon>Pipoidea</taxon>
        <taxon>Pipidae</taxon>
        <taxon>Xenopodinae</taxon>
        <taxon>Xenopus</taxon>
        <taxon>Silurana</taxon>
    </lineage>
</organism>
<reference key="1">
    <citation type="submission" date="2008-02" db="EMBL/GenBank/DDBJ databases">
        <authorList>
            <consortium name="NIH - Xenopus Gene Collection (XGC) project"/>
        </authorList>
    </citation>
    <scope>NUCLEOTIDE SEQUENCE [LARGE SCALE MRNA]</scope>
    <source>
        <tissue>Brain</tissue>
    </source>
</reference>
<name>SPNS2_XENTR</name>
<feature type="chain" id="PRO_0000363954" description="Sphingosine-1-phosphate transporter SPNS2">
    <location>
        <begin position="1"/>
        <end position="513"/>
    </location>
</feature>
<feature type="transmembrane region" description="Helical" evidence="3">
    <location>
        <begin position="102"/>
        <end position="122"/>
    </location>
</feature>
<feature type="transmembrane region" description="Helical" evidence="3">
    <location>
        <begin position="130"/>
        <end position="150"/>
    </location>
</feature>
<feature type="transmembrane region" description="Helical" evidence="3">
    <location>
        <begin position="163"/>
        <end position="183"/>
    </location>
</feature>
<feature type="transmembrane region" description="Helical" evidence="3">
    <location>
        <begin position="190"/>
        <end position="210"/>
    </location>
</feature>
<feature type="transmembrane region" description="Helical" evidence="3">
    <location>
        <begin position="222"/>
        <end position="242"/>
    </location>
</feature>
<feature type="transmembrane region" description="Helical" evidence="3">
    <location>
        <begin position="276"/>
        <end position="296"/>
    </location>
</feature>
<feature type="transmembrane region" description="Helical" evidence="3">
    <location>
        <begin position="320"/>
        <end position="340"/>
    </location>
</feature>
<feature type="transmembrane region" description="Helical" evidence="3">
    <location>
        <begin position="354"/>
        <end position="374"/>
    </location>
</feature>
<feature type="transmembrane region" description="Helical" evidence="3">
    <location>
        <begin position="378"/>
        <end position="398"/>
    </location>
</feature>
<feature type="transmembrane region" description="Helical" evidence="3">
    <location>
        <begin position="422"/>
        <end position="442"/>
    </location>
</feature>
<feature type="transmembrane region" description="Helical" evidence="3">
    <location>
        <begin position="463"/>
        <end position="483"/>
    </location>
</feature>
<gene>
    <name type="primary">spns2</name>
</gene>
<proteinExistence type="evidence at transcript level"/>
<protein>
    <recommendedName>
        <fullName evidence="4">Sphingosine-1-phosphate transporter SPNS2</fullName>
    </recommendedName>
    <alternativeName>
        <fullName evidence="4">Protein spinster homolog 2</fullName>
    </alternativeName>
</protein>
<sequence length="513" mass="55447">MCLESDGVGTVSNSQGCIPGAEERGLETLPGRMNPTSLDVKAVELESSSSKPDKAYNWKRASVAAAGILSVGNVLNYLDRYTVAGVLLDIQQHFEVKDSGAGLLQTVFICSFMVAAPIFGYLGDRFNRKVILSSGIFFWSAITFSSSFIPKKYFWLLVLSRGLVGIGEASYSTIAPTIIGDLFTKNTRTLMLSVFYFAIPLGSGLGYITGSSVKQVAGDWRWALRVSPVLGVITGTLLLIFVPTAKRGHAEQLKGSSWIRDMRGLIKNRSYVFSSLATSTVSFATGALGMWIPLYLYRAQVVQKSVEPCNIPPCSTKDSLIFGAITCLTGFLGVIIGAGATKWCRRKTQRADPLVCAVGMLGSAIFICLVFVAAKSSIIAAYICIFAGETLLFSNWAITADMLMYVVIPTRRATAVALQSFTSHLLGDAGSPYLIGFISDLIQQSTTKSSLWEFLSLGYALMLCPFVVVLGGMFFLATALFFLEDREKAEKLEPCSDPFTVGNCSDSEEASIL</sequence>